<keyword id="KW-0028">Amino-acid biosynthesis</keyword>
<keyword id="KW-0055">Arginine biosynthesis</keyword>
<keyword id="KW-0067">ATP-binding</keyword>
<keyword id="KW-0436">Ligase</keyword>
<keyword id="KW-0460">Magnesium</keyword>
<keyword id="KW-0464">Manganese</keyword>
<keyword id="KW-0479">Metal-binding</keyword>
<keyword id="KW-0547">Nucleotide-binding</keyword>
<keyword id="KW-0665">Pyrimidine biosynthesis</keyword>
<keyword id="KW-0677">Repeat</keyword>
<feature type="chain" id="PRO_1000085562" description="Carbamoyl phosphate synthase large chain">
    <location>
        <begin position="1"/>
        <end position="1057"/>
    </location>
</feature>
<feature type="domain" description="ATP-grasp 1" evidence="1">
    <location>
        <begin position="133"/>
        <end position="327"/>
    </location>
</feature>
<feature type="domain" description="ATP-grasp 2" evidence="1">
    <location>
        <begin position="671"/>
        <end position="861"/>
    </location>
</feature>
<feature type="domain" description="MGS-like" evidence="1">
    <location>
        <begin position="930"/>
        <end position="1057"/>
    </location>
</feature>
<feature type="region of interest" description="Carboxyphosphate synthetic domain" evidence="1">
    <location>
        <begin position="1"/>
        <end position="401"/>
    </location>
</feature>
<feature type="region of interest" description="Oligomerization domain" evidence="1">
    <location>
        <begin position="402"/>
        <end position="546"/>
    </location>
</feature>
<feature type="region of interest" description="Carbamoyl phosphate synthetic domain" evidence="1">
    <location>
        <begin position="547"/>
        <end position="929"/>
    </location>
</feature>
<feature type="region of interest" description="Allosteric domain" evidence="1">
    <location>
        <begin position="930"/>
        <end position="1057"/>
    </location>
</feature>
<feature type="binding site" evidence="1">
    <location>
        <position position="129"/>
    </location>
    <ligand>
        <name>ATP</name>
        <dbReference type="ChEBI" id="CHEBI:30616"/>
        <label>1</label>
    </ligand>
</feature>
<feature type="binding site" evidence="1">
    <location>
        <position position="169"/>
    </location>
    <ligand>
        <name>ATP</name>
        <dbReference type="ChEBI" id="CHEBI:30616"/>
        <label>1</label>
    </ligand>
</feature>
<feature type="binding site" evidence="1">
    <location>
        <position position="175"/>
    </location>
    <ligand>
        <name>ATP</name>
        <dbReference type="ChEBI" id="CHEBI:30616"/>
        <label>1</label>
    </ligand>
</feature>
<feature type="binding site" evidence="1">
    <location>
        <position position="176"/>
    </location>
    <ligand>
        <name>ATP</name>
        <dbReference type="ChEBI" id="CHEBI:30616"/>
        <label>1</label>
    </ligand>
</feature>
<feature type="binding site" evidence="1">
    <location>
        <position position="208"/>
    </location>
    <ligand>
        <name>ATP</name>
        <dbReference type="ChEBI" id="CHEBI:30616"/>
        <label>1</label>
    </ligand>
</feature>
<feature type="binding site" evidence="1">
    <location>
        <position position="210"/>
    </location>
    <ligand>
        <name>ATP</name>
        <dbReference type="ChEBI" id="CHEBI:30616"/>
        <label>1</label>
    </ligand>
</feature>
<feature type="binding site" evidence="1">
    <location>
        <position position="215"/>
    </location>
    <ligand>
        <name>ATP</name>
        <dbReference type="ChEBI" id="CHEBI:30616"/>
        <label>1</label>
    </ligand>
</feature>
<feature type="binding site" evidence="1">
    <location>
        <position position="241"/>
    </location>
    <ligand>
        <name>ATP</name>
        <dbReference type="ChEBI" id="CHEBI:30616"/>
        <label>1</label>
    </ligand>
</feature>
<feature type="binding site" evidence="1">
    <location>
        <position position="242"/>
    </location>
    <ligand>
        <name>ATP</name>
        <dbReference type="ChEBI" id="CHEBI:30616"/>
        <label>1</label>
    </ligand>
</feature>
<feature type="binding site" evidence="1">
    <location>
        <position position="243"/>
    </location>
    <ligand>
        <name>ATP</name>
        <dbReference type="ChEBI" id="CHEBI:30616"/>
        <label>1</label>
    </ligand>
</feature>
<feature type="binding site" evidence="1">
    <location>
        <position position="284"/>
    </location>
    <ligand>
        <name>ATP</name>
        <dbReference type="ChEBI" id="CHEBI:30616"/>
        <label>1</label>
    </ligand>
</feature>
<feature type="binding site" evidence="1">
    <location>
        <position position="284"/>
    </location>
    <ligand>
        <name>Mg(2+)</name>
        <dbReference type="ChEBI" id="CHEBI:18420"/>
        <label>1</label>
    </ligand>
</feature>
<feature type="binding site" evidence="1">
    <location>
        <position position="284"/>
    </location>
    <ligand>
        <name>Mn(2+)</name>
        <dbReference type="ChEBI" id="CHEBI:29035"/>
        <label>1</label>
    </ligand>
</feature>
<feature type="binding site" evidence="1">
    <location>
        <position position="298"/>
    </location>
    <ligand>
        <name>ATP</name>
        <dbReference type="ChEBI" id="CHEBI:30616"/>
        <label>1</label>
    </ligand>
</feature>
<feature type="binding site" evidence="1">
    <location>
        <position position="298"/>
    </location>
    <ligand>
        <name>Mg(2+)</name>
        <dbReference type="ChEBI" id="CHEBI:18420"/>
        <label>1</label>
    </ligand>
</feature>
<feature type="binding site" evidence="1">
    <location>
        <position position="298"/>
    </location>
    <ligand>
        <name>Mg(2+)</name>
        <dbReference type="ChEBI" id="CHEBI:18420"/>
        <label>2</label>
    </ligand>
</feature>
<feature type="binding site" evidence="1">
    <location>
        <position position="298"/>
    </location>
    <ligand>
        <name>Mn(2+)</name>
        <dbReference type="ChEBI" id="CHEBI:29035"/>
        <label>1</label>
    </ligand>
</feature>
<feature type="binding site" evidence="1">
    <location>
        <position position="298"/>
    </location>
    <ligand>
        <name>Mn(2+)</name>
        <dbReference type="ChEBI" id="CHEBI:29035"/>
        <label>2</label>
    </ligand>
</feature>
<feature type="binding site" evidence="1">
    <location>
        <position position="300"/>
    </location>
    <ligand>
        <name>Mg(2+)</name>
        <dbReference type="ChEBI" id="CHEBI:18420"/>
        <label>2</label>
    </ligand>
</feature>
<feature type="binding site" evidence="1">
    <location>
        <position position="300"/>
    </location>
    <ligand>
        <name>Mn(2+)</name>
        <dbReference type="ChEBI" id="CHEBI:29035"/>
        <label>2</label>
    </ligand>
</feature>
<feature type="binding site" evidence="1">
    <location>
        <position position="707"/>
    </location>
    <ligand>
        <name>ATP</name>
        <dbReference type="ChEBI" id="CHEBI:30616"/>
        <label>2</label>
    </ligand>
</feature>
<feature type="binding site" evidence="1">
    <location>
        <position position="746"/>
    </location>
    <ligand>
        <name>ATP</name>
        <dbReference type="ChEBI" id="CHEBI:30616"/>
        <label>2</label>
    </ligand>
</feature>
<feature type="binding site" evidence="1">
    <location>
        <position position="748"/>
    </location>
    <ligand>
        <name>ATP</name>
        <dbReference type="ChEBI" id="CHEBI:30616"/>
        <label>2</label>
    </ligand>
</feature>
<feature type="binding site" evidence="1">
    <location>
        <position position="752"/>
    </location>
    <ligand>
        <name>ATP</name>
        <dbReference type="ChEBI" id="CHEBI:30616"/>
        <label>2</label>
    </ligand>
</feature>
<feature type="binding site" evidence="1">
    <location>
        <position position="777"/>
    </location>
    <ligand>
        <name>ATP</name>
        <dbReference type="ChEBI" id="CHEBI:30616"/>
        <label>2</label>
    </ligand>
</feature>
<feature type="binding site" evidence="1">
    <location>
        <position position="778"/>
    </location>
    <ligand>
        <name>ATP</name>
        <dbReference type="ChEBI" id="CHEBI:30616"/>
        <label>2</label>
    </ligand>
</feature>
<feature type="binding site" evidence="1">
    <location>
        <position position="779"/>
    </location>
    <ligand>
        <name>ATP</name>
        <dbReference type="ChEBI" id="CHEBI:30616"/>
        <label>2</label>
    </ligand>
</feature>
<feature type="binding site" evidence="1">
    <location>
        <position position="780"/>
    </location>
    <ligand>
        <name>ATP</name>
        <dbReference type="ChEBI" id="CHEBI:30616"/>
        <label>2</label>
    </ligand>
</feature>
<feature type="binding site" evidence="1">
    <location>
        <position position="820"/>
    </location>
    <ligand>
        <name>ATP</name>
        <dbReference type="ChEBI" id="CHEBI:30616"/>
        <label>2</label>
    </ligand>
</feature>
<feature type="binding site" evidence="1">
    <location>
        <position position="820"/>
    </location>
    <ligand>
        <name>Mg(2+)</name>
        <dbReference type="ChEBI" id="CHEBI:18420"/>
        <label>3</label>
    </ligand>
</feature>
<feature type="binding site" evidence="1">
    <location>
        <position position="820"/>
    </location>
    <ligand>
        <name>Mn(2+)</name>
        <dbReference type="ChEBI" id="CHEBI:29035"/>
        <label>3</label>
    </ligand>
</feature>
<feature type="binding site" evidence="1">
    <location>
        <position position="832"/>
    </location>
    <ligand>
        <name>ATP</name>
        <dbReference type="ChEBI" id="CHEBI:30616"/>
        <label>2</label>
    </ligand>
</feature>
<feature type="binding site" evidence="1">
    <location>
        <position position="832"/>
    </location>
    <ligand>
        <name>Mg(2+)</name>
        <dbReference type="ChEBI" id="CHEBI:18420"/>
        <label>3</label>
    </ligand>
</feature>
<feature type="binding site" evidence="1">
    <location>
        <position position="832"/>
    </location>
    <ligand>
        <name>Mg(2+)</name>
        <dbReference type="ChEBI" id="CHEBI:18420"/>
        <label>4</label>
    </ligand>
</feature>
<feature type="binding site" evidence="1">
    <location>
        <position position="832"/>
    </location>
    <ligand>
        <name>Mn(2+)</name>
        <dbReference type="ChEBI" id="CHEBI:29035"/>
        <label>3</label>
    </ligand>
</feature>
<feature type="binding site" evidence="1">
    <location>
        <position position="832"/>
    </location>
    <ligand>
        <name>Mn(2+)</name>
        <dbReference type="ChEBI" id="CHEBI:29035"/>
        <label>4</label>
    </ligand>
</feature>
<feature type="binding site" evidence="1">
    <location>
        <position position="834"/>
    </location>
    <ligand>
        <name>Mg(2+)</name>
        <dbReference type="ChEBI" id="CHEBI:18420"/>
        <label>4</label>
    </ligand>
</feature>
<feature type="binding site" evidence="1">
    <location>
        <position position="834"/>
    </location>
    <ligand>
        <name>Mn(2+)</name>
        <dbReference type="ChEBI" id="CHEBI:29035"/>
        <label>4</label>
    </ligand>
</feature>
<protein>
    <recommendedName>
        <fullName evidence="1">Carbamoyl phosphate synthase large chain</fullName>
        <ecNumber evidence="1">6.3.4.16</ecNumber>
        <ecNumber evidence="1">6.3.5.5</ecNumber>
    </recommendedName>
    <alternativeName>
        <fullName evidence="1">Carbamoyl phosphate synthetase ammonia chain</fullName>
    </alternativeName>
</protein>
<reference key="1">
    <citation type="submission" date="2007-06" db="EMBL/GenBank/DDBJ databases">
        <title>Complete sequence of chromosome of Staphylococcus aureus subsp. aureus JH1.</title>
        <authorList>
            <consortium name="US DOE Joint Genome Institute"/>
            <person name="Copeland A."/>
            <person name="Lucas S."/>
            <person name="Lapidus A."/>
            <person name="Barry K."/>
            <person name="Detter J.C."/>
            <person name="Glavina del Rio T."/>
            <person name="Hammon N."/>
            <person name="Israni S."/>
            <person name="Dalin E."/>
            <person name="Tice H."/>
            <person name="Pitluck S."/>
            <person name="Chain P."/>
            <person name="Malfatti S."/>
            <person name="Shin M."/>
            <person name="Vergez L."/>
            <person name="Schmutz J."/>
            <person name="Larimer F."/>
            <person name="Land M."/>
            <person name="Hauser L."/>
            <person name="Kyrpides N."/>
            <person name="Ivanova N."/>
            <person name="Tomasz A."/>
            <person name="Richardson P."/>
        </authorList>
    </citation>
    <scope>NUCLEOTIDE SEQUENCE [LARGE SCALE GENOMIC DNA]</scope>
    <source>
        <strain>JH1</strain>
    </source>
</reference>
<comment type="function">
    <text evidence="1">Large subunit of the glutamine-dependent carbamoyl phosphate synthetase (CPSase). CPSase catalyzes the formation of carbamoyl phosphate from the ammonia moiety of glutamine, carbonate, and phosphate donated by ATP, constituting the first step of 2 biosynthetic pathways, one leading to arginine and/or urea and the other to pyrimidine nucleotides. The large subunit (synthetase) binds the substrates ammonia (free or transferred from glutamine from the small subunit), hydrogencarbonate and ATP and carries out an ATP-coupled ligase reaction, activating hydrogencarbonate by forming carboxy phosphate which reacts with ammonia to form carbamoyl phosphate.</text>
</comment>
<comment type="catalytic activity">
    <reaction evidence="1">
        <text>hydrogencarbonate + L-glutamine + 2 ATP + H2O = carbamoyl phosphate + L-glutamate + 2 ADP + phosphate + 2 H(+)</text>
        <dbReference type="Rhea" id="RHEA:18633"/>
        <dbReference type="ChEBI" id="CHEBI:15377"/>
        <dbReference type="ChEBI" id="CHEBI:15378"/>
        <dbReference type="ChEBI" id="CHEBI:17544"/>
        <dbReference type="ChEBI" id="CHEBI:29985"/>
        <dbReference type="ChEBI" id="CHEBI:30616"/>
        <dbReference type="ChEBI" id="CHEBI:43474"/>
        <dbReference type="ChEBI" id="CHEBI:58228"/>
        <dbReference type="ChEBI" id="CHEBI:58359"/>
        <dbReference type="ChEBI" id="CHEBI:456216"/>
        <dbReference type="EC" id="6.3.5.5"/>
    </reaction>
</comment>
<comment type="catalytic activity">
    <molecule>Carbamoyl phosphate synthase large chain</molecule>
    <reaction evidence="1">
        <text>hydrogencarbonate + NH4(+) + 2 ATP = carbamoyl phosphate + 2 ADP + phosphate + 2 H(+)</text>
        <dbReference type="Rhea" id="RHEA:18029"/>
        <dbReference type="ChEBI" id="CHEBI:15378"/>
        <dbReference type="ChEBI" id="CHEBI:17544"/>
        <dbReference type="ChEBI" id="CHEBI:28938"/>
        <dbReference type="ChEBI" id="CHEBI:30616"/>
        <dbReference type="ChEBI" id="CHEBI:43474"/>
        <dbReference type="ChEBI" id="CHEBI:58228"/>
        <dbReference type="ChEBI" id="CHEBI:456216"/>
        <dbReference type="EC" id="6.3.4.16"/>
    </reaction>
</comment>
<comment type="cofactor">
    <cofactor evidence="1">
        <name>Mg(2+)</name>
        <dbReference type="ChEBI" id="CHEBI:18420"/>
    </cofactor>
    <cofactor evidence="1">
        <name>Mn(2+)</name>
        <dbReference type="ChEBI" id="CHEBI:29035"/>
    </cofactor>
    <text evidence="1">Binds 4 Mg(2+) or Mn(2+) ions per subunit.</text>
</comment>
<comment type="pathway">
    <text evidence="1">Amino-acid biosynthesis; L-arginine biosynthesis; carbamoyl phosphate from bicarbonate: step 1/1.</text>
</comment>
<comment type="pathway">
    <text evidence="1">Pyrimidine metabolism; UMP biosynthesis via de novo pathway; (S)-dihydroorotate from bicarbonate: step 1/3.</text>
</comment>
<comment type="subunit">
    <text evidence="1">Composed of two chains; the small (or glutamine) chain promotes the hydrolysis of glutamine to ammonia, which is used by the large (or ammonia) chain to synthesize carbamoyl phosphate. Tetramer of heterodimers (alpha,beta)4.</text>
</comment>
<comment type="domain">
    <text evidence="1">The large subunit is composed of 2 ATP-grasp domains that are involved in binding the 2 ATP molecules needed for carbamoyl phosphate synthesis. The N-terminal ATP-grasp domain (referred to as the carboxyphosphate synthetic component) catalyzes the ATP-dependent phosphorylation of hydrogencarbonate to carboxyphosphate and the subsequent nucleophilic attack by ammonia to form a carbamate intermediate. The C-terminal ATP-grasp domain (referred to as the carbamoyl phosphate synthetic component) then catalyzes the phosphorylation of carbamate with the second ATP to form the end product carbamoyl phosphate. The reactive and unstable enzyme intermediates are sequentially channeled from one active site to the next through the interior of the protein over a distance of at least 96 A.</text>
</comment>
<comment type="similarity">
    <text evidence="1">Belongs to the CarB family.</text>
</comment>
<gene>
    <name evidence="1" type="primary">carB</name>
    <name type="ordered locus">SaurJH1_1287</name>
</gene>
<organism>
    <name type="scientific">Staphylococcus aureus (strain JH1)</name>
    <dbReference type="NCBI Taxonomy" id="359787"/>
    <lineage>
        <taxon>Bacteria</taxon>
        <taxon>Bacillati</taxon>
        <taxon>Bacillota</taxon>
        <taxon>Bacilli</taxon>
        <taxon>Bacillales</taxon>
        <taxon>Staphylococcaceae</taxon>
        <taxon>Staphylococcus</taxon>
    </lineage>
</organism>
<name>CARB_STAA2</name>
<sequence length="1057" mass="117172">MPKRNDIKTILVIGSGPIIIGQAAEFDYAGTQACLALKEEGYRVILVNSNPATIMTDKEIADKVYIEPLTHDFIARIIRKEQPDALLPTLGGQTGLNMAIQLHESGVLQDNNVQLLGTELTSIQQAEDREMFRTLMNDLNVPVPESDIVNTVEQAFKFKEQVGYPLIVRPAFTMGGTGGGICHNDEELHEIVSNGLHYSPATQCLLEKSIAGFKEIEYEVMRDKNDNAIVVCNMENIDPVGIHTGDSIVVAPSQTLSDVEYQMLRDVSLKVIRALGIEGGCNVQLALDPHSFDYYIIEVNPRVSRSSALASKATGYPIAKLAAKIAVGLTLDEMLNPITGTSYAAFEPTLDYVISKIPRFPFDKFEKGERELGTQMKATGEVMAIGRTYEESLLKAIRSLEYGVHHLGLPNGESFDLDYIKERISHQDDERLFFIGEAIRRGTTLEEIHNMTQIDYFFLHKFQNIIDIEHQLKEHQGDLEYLKYAKDYGFSDKTIAHRFNMTEEEVYQLRMENDIKPVYKMVDTCAAEFESSTPYYYGTYETENESIVTDKEKILVLGSGPIRIGQGVEFDYATVHAVWAIQKAGYEAIIVNNNPETVSTDFSISDKLYFEPLTEEDVMNIINLEKPKGVVVQFGGQTAINLADKLAKHGVKILGTSLENLNRAEDRKEFEALLRKINVPQPQGKSATSPEEALANAAEIGYPVVVRPSYVLGGRAMEIVDNDKELENYMTQAVKASPEHPVLVDRYLTGKEIEVDAICDGETVIIPGIMEHIERAGVHSGDSIAVYPPQTLTEDELATLEDYTIKLAKGLNIIGLINIQFVIAHDGVYVLEVNPRSSRTVPFLSKITDIPMAQLAMRAIIGEKLTDMGYQEGVQPYAEGVFVKAPVFSFNKLKNVDITLGPEMKSTGEVMGKDTTLEKALFKGLTGSGVEVKDHGTVLMTVSDKDKEEVVKLAQRLNEVGYKILATSGTANKLAEYDIPAEVVGKIGGENDLLTRIQNGDVQIVINTMTKGKEVERDGFQIRRTTVENGIPCLTSLDTANALTNVIESMTFTMRQM</sequence>
<evidence type="ECO:0000255" key="1">
    <source>
        <dbReference type="HAMAP-Rule" id="MF_01210"/>
    </source>
</evidence>
<proteinExistence type="inferred from homology"/>
<accession>A6U122</accession>
<dbReference type="EC" id="6.3.4.16" evidence="1"/>
<dbReference type="EC" id="6.3.5.5" evidence="1"/>
<dbReference type="EMBL" id="CP000736">
    <property type="protein sequence ID" value="ABR52140.1"/>
    <property type="molecule type" value="Genomic_DNA"/>
</dbReference>
<dbReference type="SMR" id="A6U122"/>
<dbReference type="KEGG" id="sah:SaurJH1_1287"/>
<dbReference type="HOGENOM" id="CLU_000513_1_2_9"/>
<dbReference type="UniPathway" id="UPA00068">
    <property type="reaction ID" value="UER00171"/>
</dbReference>
<dbReference type="UniPathway" id="UPA00070">
    <property type="reaction ID" value="UER00115"/>
</dbReference>
<dbReference type="GO" id="GO:0005737">
    <property type="term" value="C:cytoplasm"/>
    <property type="evidence" value="ECO:0007669"/>
    <property type="project" value="TreeGrafter"/>
</dbReference>
<dbReference type="GO" id="GO:0005524">
    <property type="term" value="F:ATP binding"/>
    <property type="evidence" value="ECO:0007669"/>
    <property type="project" value="UniProtKB-UniRule"/>
</dbReference>
<dbReference type="GO" id="GO:0004087">
    <property type="term" value="F:carbamoyl-phosphate synthase (ammonia) activity"/>
    <property type="evidence" value="ECO:0007669"/>
    <property type="project" value="RHEA"/>
</dbReference>
<dbReference type="GO" id="GO:0004088">
    <property type="term" value="F:carbamoyl-phosphate synthase (glutamine-hydrolyzing) activity"/>
    <property type="evidence" value="ECO:0007669"/>
    <property type="project" value="UniProtKB-UniRule"/>
</dbReference>
<dbReference type="GO" id="GO:0046872">
    <property type="term" value="F:metal ion binding"/>
    <property type="evidence" value="ECO:0007669"/>
    <property type="project" value="UniProtKB-KW"/>
</dbReference>
<dbReference type="GO" id="GO:0044205">
    <property type="term" value="P:'de novo' UMP biosynthetic process"/>
    <property type="evidence" value="ECO:0007669"/>
    <property type="project" value="UniProtKB-UniRule"/>
</dbReference>
<dbReference type="GO" id="GO:0006541">
    <property type="term" value="P:glutamine metabolic process"/>
    <property type="evidence" value="ECO:0007669"/>
    <property type="project" value="TreeGrafter"/>
</dbReference>
<dbReference type="GO" id="GO:0006526">
    <property type="term" value="P:L-arginine biosynthetic process"/>
    <property type="evidence" value="ECO:0007669"/>
    <property type="project" value="UniProtKB-UniRule"/>
</dbReference>
<dbReference type="CDD" id="cd01424">
    <property type="entry name" value="MGS_CPS_II"/>
    <property type="match status" value="1"/>
</dbReference>
<dbReference type="FunFam" id="1.10.1030.10:FF:000002">
    <property type="entry name" value="Carbamoyl-phosphate synthase large chain"/>
    <property type="match status" value="1"/>
</dbReference>
<dbReference type="FunFam" id="3.30.1490.20:FF:000001">
    <property type="entry name" value="Carbamoyl-phosphate synthase large chain"/>
    <property type="match status" value="1"/>
</dbReference>
<dbReference type="FunFam" id="3.30.470.20:FF:000001">
    <property type="entry name" value="Carbamoyl-phosphate synthase large chain"/>
    <property type="match status" value="1"/>
</dbReference>
<dbReference type="FunFam" id="3.30.470.20:FF:000026">
    <property type="entry name" value="Carbamoyl-phosphate synthase large chain"/>
    <property type="match status" value="1"/>
</dbReference>
<dbReference type="FunFam" id="3.40.50.1380:FF:000011">
    <property type="entry name" value="Carbamoyl-phosphate synthase large chain"/>
    <property type="match status" value="1"/>
</dbReference>
<dbReference type="FunFam" id="3.40.50.20:FF:000001">
    <property type="entry name" value="Carbamoyl-phosphate synthase large chain"/>
    <property type="match status" value="2"/>
</dbReference>
<dbReference type="Gene3D" id="3.40.50.20">
    <property type="match status" value="2"/>
</dbReference>
<dbReference type="Gene3D" id="3.30.1490.20">
    <property type="entry name" value="ATP-grasp fold, A domain"/>
    <property type="match status" value="1"/>
</dbReference>
<dbReference type="Gene3D" id="3.30.470.20">
    <property type="entry name" value="ATP-grasp fold, B domain"/>
    <property type="match status" value="2"/>
</dbReference>
<dbReference type="Gene3D" id="1.10.1030.10">
    <property type="entry name" value="Carbamoyl-phosphate synthetase, large subunit oligomerisation domain"/>
    <property type="match status" value="1"/>
</dbReference>
<dbReference type="Gene3D" id="3.40.50.1380">
    <property type="entry name" value="Methylglyoxal synthase-like domain"/>
    <property type="match status" value="1"/>
</dbReference>
<dbReference type="HAMAP" id="MF_01210_A">
    <property type="entry name" value="CPSase_L_chain_A"/>
    <property type="match status" value="1"/>
</dbReference>
<dbReference type="HAMAP" id="MF_01210_B">
    <property type="entry name" value="CPSase_L_chain_B"/>
    <property type="match status" value="1"/>
</dbReference>
<dbReference type="InterPro" id="IPR011761">
    <property type="entry name" value="ATP-grasp"/>
</dbReference>
<dbReference type="InterPro" id="IPR013815">
    <property type="entry name" value="ATP_grasp_subdomain_1"/>
</dbReference>
<dbReference type="InterPro" id="IPR006275">
    <property type="entry name" value="CarbamoylP_synth_lsu"/>
</dbReference>
<dbReference type="InterPro" id="IPR005480">
    <property type="entry name" value="CarbamoylP_synth_lsu_oligo"/>
</dbReference>
<dbReference type="InterPro" id="IPR036897">
    <property type="entry name" value="CarbamoylP_synth_lsu_oligo_sf"/>
</dbReference>
<dbReference type="InterPro" id="IPR005479">
    <property type="entry name" value="CbamoylP_synth_lsu-like_ATP-bd"/>
</dbReference>
<dbReference type="InterPro" id="IPR005483">
    <property type="entry name" value="CbamoylP_synth_lsu_CPSase_dom"/>
</dbReference>
<dbReference type="InterPro" id="IPR011607">
    <property type="entry name" value="MGS-like_dom"/>
</dbReference>
<dbReference type="InterPro" id="IPR036914">
    <property type="entry name" value="MGS-like_dom_sf"/>
</dbReference>
<dbReference type="InterPro" id="IPR033937">
    <property type="entry name" value="MGS_CPS_CarB"/>
</dbReference>
<dbReference type="InterPro" id="IPR016185">
    <property type="entry name" value="PreATP-grasp_dom_sf"/>
</dbReference>
<dbReference type="NCBIfam" id="TIGR01369">
    <property type="entry name" value="CPSaseII_lrg"/>
    <property type="match status" value="1"/>
</dbReference>
<dbReference type="NCBIfam" id="NF003671">
    <property type="entry name" value="PRK05294.1"/>
    <property type="match status" value="1"/>
</dbReference>
<dbReference type="NCBIfam" id="NF009455">
    <property type="entry name" value="PRK12815.1"/>
    <property type="match status" value="1"/>
</dbReference>
<dbReference type="PANTHER" id="PTHR11405:SF53">
    <property type="entry name" value="CARBAMOYL-PHOSPHATE SYNTHASE [AMMONIA], MITOCHONDRIAL"/>
    <property type="match status" value="1"/>
</dbReference>
<dbReference type="PANTHER" id="PTHR11405">
    <property type="entry name" value="CARBAMOYLTRANSFERASE FAMILY MEMBER"/>
    <property type="match status" value="1"/>
</dbReference>
<dbReference type="Pfam" id="PF02786">
    <property type="entry name" value="CPSase_L_D2"/>
    <property type="match status" value="2"/>
</dbReference>
<dbReference type="Pfam" id="PF02787">
    <property type="entry name" value="CPSase_L_D3"/>
    <property type="match status" value="1"/>
</dbReference>
<dbReference type="Pfam" id="PF02142">
    <property type="entry name" value="MGS"/>
    <property type="match status" value="1"/>
</dbReference>
<dbReference type="PRINTS" id="PR00098">
    <property type="entry name" value="CPSASE"/>
</dbReference>
<dbReference type="SMART" id="SM01096">
    <property type="entry name" value="CPSase_L_D3"/>
    <property type="match status" value="1"/>
</dbReference>
<dbReference type="SMART" id="SM01209">
    <property type="entry name" value="GARS_A"/>
    <property type="match status" value="1"/>
</dbReference>
<dbReference type="SMART" id="SM00851">
    <property type="entry name" value="MGS"/>
    <property type="match status" value="1"/>
</dbReference>
<dbReference type="SUPFAM" id="SSF48108">
    <property type="entry name" value="Carbamoyl phosphate synthetase, large subunit connection domain"/>
    <property type="match status" value="1"/>
</dbReference>
<dbReference type="SUPFAM" id="SSF56059">
    <property type="entry name" value="Glutathione synthetase ATP-binding domain-like"/>
    <property type="match status" value="2"/>
</dbReference>
<dbReference type="SUPFAM" id="SSF52335">
    <property type="entry name" value="Methylglyoxal synthase-like"/>
    <property type="match status" value="1"/>
</dbReference>
<dbReference type="SUPFAM" id="SSF52440">
    <property type="entry name" value="PreATP-grasp domain"/>
    <property type="match status" value="2"/>
</dbReference>
<dbReference type="PROSITE" id="PS50975">
    <property type="entry name" value="ATP_GRASP"/>
    <property type="match status" value="2"/>
</dbReference>
<dbReference type="PROSITE" id="PS00866">
    <property type="entry name" value="CPSASE_1"/>
    <property type="match status" value="2"/>
</dbReference>
<dbReference type="PROSITE" id="PS00867">
    <property type="entry name" value="CPSASE_2"/>
    <property type="match status" value="2"/>
</dbReference>
<dbReference type="PROSITE" id="PS51855">
    <property type="entry name" value="MGS"/>
    <property type="match status" value="1"/>
</dbReference>